<organism>
    <name type="scientific">Bubalus bubalis</name>
    <name type="common">Domestic water buffalo</name>
    <dbReference type="NCBI Taxonomy" id="89462"/>
    <lineage>
        <taxon>Eukaryota</taxon>
        <taxon>Metazoa</taxon>
        <taxon>Chordata</taxon>
        <taxon>Craniata</taxon>
        <taxon>Vertebrata</taxon>
        <taxon>Euteleostomi</taxon>
        <taxon>Mammalia</taxon>
        <taxon>Eutheria</taxon>
        <taxon>Laurasiatheria</taxon>
        <taxon>Artiodactyla</taxon>
        <taxon>Ruminantia</taxon>
        <taxon>Pecora</taxon>
        <taxon>Bovidae</taxon>
        <taxon>Bovinae</taxon>
        <taxon>Bubalus</taxon>
    </lineage>
</organism>
<sequence length="21" mass="2379">QFPTDYDEGQDDRPKLGLGAR</sequence>
<name>FIBB_BUBBU</name>
<comment type="function">
    <text evidence="1">Cleaved by the protease thrombin to yield monomers which, together with fibrinogen alpha (FGA) and fibrinogen gamma (FGG), polymerize to form an insoluble fibrin matrix. Fibrin has a major function in hemostasis as one of the primary components of blood clots. In addition, functions during the early stages of wound repair to stabilize the lesion and guide cell migration during re-epithelialization. Was originally thought to be essential for platelet aggregation, based on in vitro studies using anticoagulated blood. However subsequent studies have shown that it is not absolutely required for thrombus formation in vivo. Enhances expression of SELP in activated platelets. Maternal fibrinogen is essential for successful pregnancy. Fibrin deposition is also associated with infection, where it protects against IFNG-mediated hemorrhage. May also facilitate the antibacterial immune response via both innate and T-cell mediated pathways.</text>
</comment>
<comment type="subunit">
    <text evidence="2">Heterohexamer; disulfide linked. Contains 2 sets of 3 non-identical chains (alpha, beta and gamma). The 2 heterotrimers are in head to head conformation with the N-termini in a small central domain (By similarity).</text>
</comment>
<comment type="subcellular location">
    <subcellularLocation>
        <location>Secreted</location>
    </subcellularLocation>
</comment>
<comment type="domain">
    <text evidence="2">A long coiled coil structure formed by 3 polypeptide chains connects the central nodule to the C-terminal domains (distal nodules). The long C-terminal ends of the alpha chains fold back, contributing a fourth strand to the coiled coil structure.</text>
</comment>
<comment type="PTM">
    <text>Conversion of fibrinogen to fibrin is triggered by thrombin, which cleaves fibrinopeptides A and B from alpha and beta chains, and thus exposes the N-terminal polymerization sites responsible for the formation of the soft clot.</text>
</comment>
<reference key="1">
    <citation type="journal article" date="1967" name="Arch. Biochem. Biophys.">
        <title>Amino acid sequence studies on artiodacty fibrinopeptides.</title>
        <authorList>
            <person name="Mross G.A."/>
            <person name="Doolittle R.F."/>
        </authorList>
    </citation>
    <scope>PROTEIN SEQUENCE</scope>
    <scope>PYROGLUTAMATE FORMATION AT GLN-1</scope>
    <scope>SULFATION AT TYR-6</scope>
</reference>
<reference key="2">
    <citation type="journal article" date="1975" name="Biochim. Biophys. Acta">
        <title>Covalent structure of fibrinopeptides from buffaloes breeding in Italy.</title>
        <authorList>
            <person name="Balestrieri C."/>
            <person name="Colonna G."/>
            <person name="Irace G."/>
        </authorList>
    </citation>
    <scope>PROTEIN SEQUENCE</scope>
    <source>
        <strain>Italian breed</strain>
    </source>
</reference>
<keyword id="KW-1064">Adaptive immunity</keyword>
<keyword id="KW-0094">Blood coagulation</keyword>
<keyword id="KW-0175">Coiled coil</keyword>
<keyword id="KW-0903">Direct protein sequencing</keyword>
<keyword id="KW-1015">Disulfide bond</keyword>
<keyword id="KW-0325">Glycoprotein</keyword>
<keyword id="KW-0356">Hemostasis</keyword>
<keyword id="KW-0391">Immunity</keyword>
<keyword id="KW-0399">Innate immunity</keyword>
<keyword id="KW-0873">Pyrrolidone carboxylic acid</keyword>
<keyword id="KW-0964">Secreted</keyword>
<keyword id="KW-0765">Sulfation</keyword>
<dbReference type="GlyCosmos" id="P14467">
    <property type="glycosylation" value="1 site, No reported glycans"/>
</dbReference>
<dbReference type="GO" id="GO:0005576">
    <property type="term" value="C:extracellular region"/>
    <property type="evidence" value="ECO:0007669"/>
    <property type="project" value="UniProtKB-SubCell"/>
</dbReference>
<dbReference type="GO" id="GO:0002250">
    <property type="term" value="P:adaptive immune response"/>
    <property type="evidence" value="ECO:0007669"/>
    <property type="project" value="UniProtKB-KW"/>
</dbReference>
<dbReference type="GO" id="GO:0007596">
    <property type="term" value="P:blood coagulation"/>
    <property type="evidence" value="ECO:0007669"/>
    <property type="project" value="UniProtKB-KW"/>
</dbReference>
<dbReference type="GO" id="GO:0045087">
    <property type="term" value="P:innate immune response"/>
    <property type="evidence" value="ECO:0007669"/>
    <property type="project" value="UniProtKB-KW"/>
</dbReference>
<accession>P14467</accession>
<protein>
    <recommendedName>
        <fullName>Fibrinogen beta chain</fullName>
    </recommendedName>
    <component>
        <recommendedName>
            <fullName>Fibrinopeptide B</fullName>
        </recommendedName>
    </component>
</protein>
<gene>
    <name type="primary">FGB</name>
</gene>
<feature type="peptide" id="PRO_0000009057" description="Fibrinopeptide B">
    <location>
        <begin position="1"/>
        <end position="21"/>
    </location>
</feature>
<feature type="region of interest" description="Disordered" evidence="4">
    <location>
        <begin position="1"/>
        <end position="21"/>
    </location>
</feature>
<feature type="compositionally biased region" description="Acidic residues" evidence="4">
    <location>
        <begin position="1"/>
        <end position="10"/>
    </location>
</feature>
<feature type="modified residue" description="Pyrrolidone carboxylic acid" evidence="5">
    <location>
        <position position="1"/>
    </location>
</feature>
<feature type="modified residue" description="Sulfotyrosine" evidence="5">
    <location>
        <position position="6"/>
    </location>
</feature>
<feature type="glycosylation site" description="O-linked (GalNAc...) threonine" evidence="3">
    <location>
        <position position="4"/>
    </location>
</feature>
<feature type="non-terminal residue">
    <location>
        <position position="21"/>
    </location>
</feature>
<proteinExistence type="evidence at protein level"/>
<evidence type="ECO:0000250" key="1">
    <source>
        <dbReference type="UniProtKB" id="E9PV24"/>
    </source>
</evidence>
<evidence type="ECO:0000250" key="2">
    <source>
        <dbReference type="UniProtKB" id="P02675"/>
    </source>
</evidence>
<evidence type="ECO:0000250" key="3">
    <source>
        <dbReference type="UniProtKB" id="P02676"/>
    </source>
</evidence>
<evidence type="ECO:0000256" key="4">
    <source>
        <dbReference type="SAM" id="MobiDB-lite"/>
    </source>
</evidence>
<evidence type="ECO:0000269" key="5">
    <source ref="1"/>
</evidence>